<evidence type="ECO:0000255" key="1">
    <source>
        <dbReference type="HAMAP-Rule" id="MF_00230"/>
    </source>
</evidence>
<gene>
    <name evidence="1" type="primary">cobT</name>
    <name type="ordered locus">BMEI1099</name>
</gene>
<name>COBT_BRUME</name>
<feature type="chain" id="PRO_0000167038" description="Nicotinate-nucleotide--dimethylbenzimidazole phosphoribosyltransferase">
    <location>
        <begin position="1"/>
        <end position="339"/>
    </location>
</feature>
<feature type="active site" description="Proton acceptor" evidence="1">
    <location>
        <position position="306"/>
    </location>
</feature>
<keyword id="KW-0169">Cobalamin biosynthesis</keyword>
<keyword id="KW-0328">Glycosyltransferase</keyword>
<keyword id="KW-0808">Transferase</keyword>
<reference key="1">
    <citation type="journal article" date="2002" name="Proc. Natl. Acad. Sci. U.S.A.">
        <title>The genome sequence of the facultative intracellular pathogen Brucella melitensis.</title>
        <authorList>
            <person name="DelVecchio V.G."/>
            <person name="Kapatral V."/>
            <person name="Redkar R.J."/>
            <person name="Patra G."/>
            <person name="Mujer C."/>
            <person name="Los T."/>
            <person name="Ivanova N."/>
            <person name="Anderson I."/>
            <person name="Bhattacharyya A."/>
            <person name="Lykidis A."/>
            <person name="Reznik G."/>
            <person name="Jablonski L."/>
            <person name="Larsen N."/>
            <person name="D'Souza M."/>
            <person name="Bernal A."/>
            <person name="Mazur M."/>
            <person name="Goltsman E."/>
            <person name="Selkov E."/>
            <person name="Elzer P.H."/>
            <person name="Hagius S."/>
            <person name="O'Callaghan D."/>
            <person name="Letesson J.-J."/>
            <person name="Haselkorn R."/>
            <person name="Kyrpides N.C."/>
            <person name="Overbeek R."/>
        </authorList>
    </citation>
    <scope>NUCLEOTIDE SEQUENCE [LARGE SCALE GENOMIC DNA]</scope>
    <source>
        <strain>ATCC 23456 / CCUG 17765 / NCTC 10094 / 16M</strain>
    </source>
</reference>
<sequence length="339" mass="35112">MSASGLPFDDFRELIRNLPGPDLGAERAVREREVTLTKPAGSLGRLEEIVAWLATWTGKRTPQVNRPLVAVFAGNHGVTAKNITPFPPSVTAQMVENFAAGGAAINQICIANDLGLKVFDLALEHPTGDITEEAAMDERTCAATMAFGMEAIAGGTDLLCIGEMGIGNTTIAAAIALALFGGTAEDWVGPGTGSTGELMQRKLAAVRLAVALHQPHLQDPLEVLRCLGGREIAAMAGAILAARMEKIPVIVDGFVASAAAAVLYAANPEAIDHCMFGQVSAEPGHRKLLAKMGKEPLLDLGMRLGEGTGAALAANIVKAAALCHSGMATFEQAGVSASK</sequence>
<dbReference type="EC" id="2.4.2.21" evidence="1"/>
<dbReference type="EMBL" id="AE008917">
    <property type="protein sequence ID" value="AAL52280.1"/>
    <property type="molecule type" value="Genomic_DNA"/>
</dbReference>
<dbReference type="PIR" id="AE3389">
    <property type="entry name" value="AE3389"/>
</dbReference>
<dbReference type="RefSeq" id="WP_004686801.1">
    <property type="nucleotide sequence ID" value="NC_003317.1"/>
</dbReference>
<dbReference type="SMR" id="Q8YGQ9"/>
<dbReference type="GeneID" id="29593926"/>
<dbReference type="KEGG" id="bme:BMEI1099"/>
<dbReference type="KEGG" id="bmel:DK63_314"/>
<dbReference type="PATRIC" id="fig|224914.52.peg.325"/>
<dbReference type="eggNOG" id="COG2038">
    <property type="taxonomic scope" value="Bacteria"/>
</dbReference>
<dbReference type="PhylomeDB" id="Q8YGQ9"/>
<dbReference type="UniPathway" id="UPA00061">
    <property type="reaction ID" value="UER00516"/>
</dbReference>
<dbReference type="Proteomes" id="UP000000419">
    <property type="component" value="Chromosome I"/>
</dbReference>
<dbReference type="GO" id="GO:0008939">
    <property type="term" value="F:nicotinate-nucleotide-dimethylbenzimidazole phosphoribosyltransferase activity"/>
    <property type="evidence" value="ECO:0007669"/>
    <property type="project" value="UniProtKB-UniRule"/>
</dbReference>
<dbReference type="GO" id="GO:0009236">
    <property type="term" value="P:cobalamin biosynthetic process"/>
    <property type="evidence" value="ECO:0007669"/>
    <property type="project" value="UniProtKB-KW"/>
</dbReference>
<dbReference type="CDD" id="cd02439">
    <property type="entry name" value="DMB-PRT_CobT"/>
    <property type="match status" value="1"/>
</dbReference>
<dbReference type="Gene3D" id="1.10.1610.10">
    <property type="match status" value="1"/>
</dbReference>
<dbReference type="Gene3D" id="3.40.50.10210">
    <property type="match status" value="1"/>
</dbReference>
<dbReference type="HAMAP" id="MF_00230">
    <property type="entry name" value="CobT"/>
    <property type="match status" value="1"/>
</dbReference>
<dbReference type="InterPro" id="IPR003200">
    <property type="entry name" value="Nict_dMeBzImd_PRibTrfase"/>
</dbReference>
<dbReference type="InterPro" id="IPR017846">
    <property type="entry name" value="Nict_dMeBzImd_PRibTrfase_bact"/>
</dbReference>
<dbReference type="InterPro" id="IPR023195">
    <property type="entry name" value="Nict_dMeBzImd_PRibTrfase_N"/>
</dbReference>
<dbReference type="InterPro" id="IPR036087">
    <property type="entry name" value="Nict_dMeBzImd_PRibTrfase_sf"/>
</dbReference>
<dbReference type="NCBIfam" id="TIGR03160">
    <property type="entry name" value="cobT_DBIPRT"/>
    <property type="match status" value="1"/>
</dbReference>
<dbReference type="NCBIfam" id="NF000996">
    <property type="entry name" value="PRK00105.1"/>
    <property type="match status" value="1"/>
</dbReference>
<dbReference type="PANTHER" id="PTHR43463">
    <property type="entry name" value="NICOTINATE-NUCLEOTIDE--DIMETHYLBENZIMIDAZOLE PHOSPHORIBOSYLTRANSFERASE"/>
    <property type="match status" value="1"/>
</dbReference>
<dbReference type="PANTHER" id="PTHR43463:SF1">
    <property type="entry name" value="NICOTINATE-NUCLEOTIDE--DIMETHYLBENZIMIDAZOLE PHOSPHORIBOSYLTRANSFERASE"/>
    <property type="match status" value="1"/>
</dbReference>
<dbReference type="Pfam" id="PF02277">
    <property type="entry name" value="DBI_PRT"/>
    <property type="match status" value="1"/>
</dbReference>
<dbReference type="SUPFAM" id="SSF52733">
    <property type="entry name" value="Nicotinate mononucleotide:5,6-dimethylbenzimidazole phosphoribosyltransferase (CobT)"/>
    <property type="match status" value="1"/>
</dbReference>
<comment type="function">
    <text evidence="1">Catalyzes the synthesis of alpha-ribazole-5'-phosphate from nicotinate mononucleotide (NAMN) and 5,6-dimethylbenzimidazole (DMB).</text>
</comment>
<comment type="catalytic activity">
    <reaction evidence="1">
        <text>5,6-dimethylbenzimidazole + nicotinate beta-D-ribonucleotide = alpha-ribazole 5'-phosphate + nicotinate + H(+)</text>
        <dbReference type="Rhea" id="RHEA:11196"/>
        <dbReference type="ChEBI" id="CHEBI:15378"/>
        <dbReference type="ChEBI" id="CHEBI:15890"/>
        <dbReference type="ChEBI" id="CHEBI:32544"/>
        <dbReference type="ChEBI" id="CHEBI:57502"/>
        <dbReference type="ChEBI" id="CHEBI:57918"/>
        <dbReference type="EC" id="2.4.2.21"/>
    </reaction>
</comment>
<comment type="pathway">
    <text evidence="1">Nucleoside biosynthesis; alpha-ribazole biosynthesis; alpha-ribazole from 5,6-dimethylbenzimidazole: step 1/2.</text>
</comment>
<comment type="similarity">
    <text evidence="1">Belongs to the CobT family.</text>
</comment>
<organism>
    <name type="scientific">Brucella melitensis biotype 1 (strain ATCC 23456 / CCUG 17765 / NCTC 10094 / 16M)</name>
    <dbReference type="NCBI Taxonomy" id="224914"/>
    <lineage>
        <taxon>Bacteria</taxon>
        <taxon>Pseudomonadati</taxon>
        <taxon>Pseudomonadota</taxon>
        <taxon>Alphaproteobacteria</taxon>
        <taxon>Hyphomicrobiales</taxon>
        <taxon>Brucellaceae</taxon>
        <taxon>Brucella/Ochrobactrum group</taxon>
        <taxon>Brucella</taxon>
    </lineage>
</organism>
<accession>Q8YGQ9</accession>
<protein>
    <recommendedName>
        <fullName evidence="1">Nicotinate-nucleotide--dimethylbenzimidazole phosphoribosyltransferase</fullName>
        <shortName evidence="1">NN:DBI PRT</shortName>
        <ecNumber evidence="1">2.4.2.21</ecNumber>
    </recommendedName>
    <alternativeName>
        <fullName evidence="1">N(1)-alpha-phosphoribosyltransferase</fullName>
    </alternativeName>
</protein>
<proteinExistence type="inferred from homology"/>